<accession>P28879</accession>
<accession>Q8I6R6</accession>
<evidence type="ECO:0000255" key="1"/>
<evidence type="ECO:0000256" key="2">
    <source>
        <dbReference type="SAM" id="MobiDB-lite"/>
    </source>
</evidence>
<evidence type="ECO:0000269" key="3">
    <source>
    </source>
</evidence>
<evidence type="ECO:0000269" key="4">
    <source>
    </source>
</evidence>
<evidence type="ECO:0000269" key="5">
    <source>
    </source>
</evidence>
<evidence type="ECO:0000303" key="6">
    <source>
    </source>
</evidence>
<evidence type="ECO:0000303" key="7">
    <source>
    </source>
</evidence>
<evidence type="ECO:0000305" key="8"/>
<evidence type="ECO:0000305" key="9">
    <source>
    </source>
</evidence>
<evidence type="ECO:0007744" key="10">
    <source>
        <dbReference type="PDB" id="6OTB"/>
    </source>
</evidence>
<evidence type="ECO:0007829" key="11">
    <source>
        <dbReference type="PDB" id="6OTB"/>
    </source>
</evidence>
<protein>
    <recommendedName>
        <fullName evidence="6 7">Alpha-conotoxin SII</fullName>
    </recommendedName>
</protein>
<proteinExistence type="evidence at protein level"/>
<name>CAS2_CONST</name>
<feature type="signal peptide" evidence="1">
    <location>
        <begin position="1"/>
        <end position="21"/>
    </location>
</feature>
<feature type="propeptide" id="PRO_0000034889" evidence="3">
    <location>
        <begin position="22"/>
        <end position="50"/>
    </location>
</feature>
<feature type="peptide" id="PRO_0000034890" description="Alpha-conotoxin SII" evidence="3">
    <location>
        <begin position="51"/>
        <end position="69"/>
    </location>
</feature>
<feature type="propeptide" id="PRO_0000034891">
    <location>
        <begin position="70"/>
        <end position="72"/>
    </location>
</feature>
<feature type="region of interest" description="Disordered" evidence="2">
    <location>
        <begin position="23"/>
        <end position="51"/>
    </location>
</feature>
<feature type="compositionally biased region" description="Basic and acidic residues" evidence="2">
    <location>
        <begin position="26"/>
        <end position="49"/>
    </location>
</feature>
<feature type="disulfide bond" evidence="4 5 10">
    <location>
        <begin position="52"/>
        <end position="68"/>
    </location>
</feature>
<feature type="disulfide bond" evidence="4 5 10">
    <location>
        <begin position="53"/>
        <end position="58"/>
    </location>
</feature>
<feature type="disulfide bond" evidence="4 5 10">
    <location>
        <begin position="54"/>
        <end position="64"/>
    </location>
</feature>
<feature type="sequence conflict" description="In Ref. 1; no nucleotide entry." evidence="8" ref="1">
    <original>P</original>
    <variation>T</variation>
    <location>
        <position position="23"/>
    </location>
</feature>
<feature type="sequence conflict" description="In Ref. 2; AAN77902." evidence="8" ref="2">
    <original>L</original>
    <variation>I</variation>
    <location>
        <position position="72"/>
    </location>
</feature>
<feature type="helix" evidence="11">
    <location>
        <begin position="56"/>
        <end position="58"/>
    </location>
</feature>
<keyword id="KW-0002">3D-structure</keyword>
<keyword id="KW-0008">Acetylcholine receptor inhibiting toxin</keyword>
<keyword id="KW-0903">Direct protein sequencing</keyword>
<keyword id="KW-1015">Disulfide bond</keyword>
<keyword id="KW-0872">Ion channel impairing toxin</keyword>
<keyword id="KW-0528">Neurotoxin</keyword>
<keyword id="KW-0629">Postsynaptic neurotoxin</keyword>
<keyword id="KW-0964">Secreted</keyword>
<keyword id="KW-0732">Signal</keyword>
<keyword id="KW-0800">Toxin</keyword>
<organism>
    <name type="scientific">Conus striatus</name>
    <name type="common">Striated cone</name>
    <dbReference type="NCBI Taxonomy" id="6493"/>
    <lineage>
        <taxon>Eukaryota</taxon>
        <taxon>Metazoa</taxon>
        <taxon>Spiralia</taxon>
        <taxon>Lophotrochozoa</taxon>
        <taxon>Mollusca</taxon>
        <taxon>Gastropoda</taxon>
        <taxon>Caenogastropoda</taxon>
        <taxon>Neogastropoda</taxon>
        <taxon>Conoidea</taxon>
        <taxon>Conidae</taxon>
        <taxon>Conus</taxon>
        <taxon>Pionoconus</taxon>
    </lineage>
</organism>
<sequence>MGMRMMFTVFLLVVLATTVVSFPSDRASDGRDDEAKDERSDMHESDRNGRGCCCNPACGPNYGCGTSCSRTL</sequence>
<reference key="1">
    <citation type="journal article" date="1999" name="Peptides">
        <title>Conopeptides from Conus striatus and Conus textile by cDNA cloning.</title>
        <authorList>
            <person name="Lu B.-S."/>
            <person name="Yu F."/>
            <person name="Zhao D."/>
            <person name="Huang P.-T."/>
            <person name="Huang C.-F."/>
        </authorList>
    </citation>
    <scope>NUCLEOTIDE SEQUENCE [MRNA]</scope>
    <source>
        <tissue>Venom duct</tissue>
    </source>
</reference>
<reference key="2">
    <citation type="journal article" date="2003" name="Toxicon">
        <title>cDNA cloning of two A-superfamily conotoxins from Conus striatus.</title>
        <authorList>
            <person name="Wang C.-Z."/>
            <person name="Jiang H."/>
            <person name="Ou Z.-L."/>
            <person name="Chen J.-S."/>
            <person name="Chi C.-W."/>
        </authorList>
    </citation>
    <scope>NUCLEOTIDE SEQUENCE [MRNA]</scope>
    <source>
        <tissue>Venom duct</tissue>
    </source>
</reference>
<reference key="3">
    <citation type="journal article" date="2004" name="J. Biol. Chem.">
        <title>The A-superfamily of conotoxins: structural and functional divergence.</title>
        <authorList>
            <person name="Santos A.D."/>
            <person name="McIntosh J.M."/>
            <person name="Hillyard D.R."/>
            <person name="Cruz L.J."/>
            <person name="Olivera B.M."/>
        </authorList>
    </citation>
    <scope>NUCLEOTIDE SEQUENCE [MRNA]</scope>
    <source>
        <tissue>Venom duct</tissue>
    </source>
</reference>
<reference key="4">
    <citation type="journal article" date="1992" name="Biochemistry">
        <title>Novel alpha- and omega-conotoxins from Conus striatus venom.</title>
        <authorList>
            <person name="Ramilo C."/>
            <person name="Zafaralla G.C."/>
            <person name="Nadasdi L."/>
            <person name="Hammerland L.G."/>
            <person name="Yoshikami D."/>
            <person name="Gray W.R."/>
            <person name="Kristipati R."/>
            <person name="Ramachandran J."/>
            <person name="Miljanich G.P."/>
            <person name="Olivera B.M."/>
            <person name="Cruz L.J."/>
        </authorList>
    </citation>
    <scope>PROTEIN SEQUENCE OF 51-69</scope>
    <scope>FUNCTION</scope>
    <scope>SYNTHESIS OF 51-69</scope>
    <scope>SUBCELLULAR LOCATION</scope>
    <source>
        <tissue>Venom</tissue>
    </source>
</reference>
<reference key="5">
    <citation type="journal article" date="2005" name="Anal. Biochem.">
        <title>Optimizing the connectivity in disulfide-rich peptides: alpha-conotoxin SII as a case study.</title>
        <authorList>
            <person name="Bingham J.-P."/>
            <person name="Broxton N.M."/>
            <person name="Livett B.G."/>
            <person name="Down J.G."/>
            <person name="Jones A."/>
            <person name="Moczydlowski E.G."/>
        </authorList>
    </citation>
    <scope>DISULFIDE BONDS</scope>
    <scope>SYNTHESIS OF 51-69</scope>
    <scope>MASS SPECTROMETRY</scope>
    <source>
        <tissue>Venom</tissue>
    </source>
</reference>
<reference evidence="10" key="6">
    <citation type="journal article" date="2022" name="ACS Chem. Neurosci.">
        <title>Cysteine-rich alpha-conotoxin SII displays novel interactions at the muscle nicotinic acetylcholine receptor.</title>
        <authorList>
            <person name="Wilhelm P."/>
            <person name="Luna-Ramirez K."/>
            <person name="Chin Y.K."/>
            <person name="Dekan Z."/>
            <person name="Abraham N."/>
            <person name="Tae H.S."/>
            <person name="Chow C.Y."/>
            <person name="Eagles D.A."/>
            <person name="King G.F."/>
            <person name="Lewis R.J."/>
            <person name="Adams D.J."/>
            <person name="Alewood P.F."/>
        </authorList>
    </citation>
    <scope>STRUCTURE BY NMR OF 51-69</scope>
    <scope>SYNTHESIS OF 51-69</scope>
    <scope>DISULFIDE BONDS</scope>
    <scope>FUNCTION</scope>
    <scope>3D-STRUCTURE MODELING IN COMPLEX WITH ACETYLCHOLINE RECEPTOR</scope>
</reference>
<comment type="function">
    <text evidence="3 5">Alpha-conotoxins act on postsynaptic membranes, they bind to the nicotinic acetylcholine receptors (nAChR) and thus inhibit them (PubMed:1390774). This toxin potently inhibits the rodent muscle nAChR (IC(50)=120 nM (adult subtype, alpha-1-beta-1-delta-epsilon/CHRNA1-CHRNB1-CHRND-CHRNE) and IC(50)=370 nM (fetal subtype, alpha-1-beta-1-gamma-delta/CHRNA1-CHRNB1-CHRNG-CHRND)) and weakly inhibits neuronal nAChRs (PubMed:35357806). In contrast to alpha-conotoxins bearing 2 disulfide bonds (framework I), this conotoxin acts via a unique binding mode with the helix and the N- and C-termini buried in the binding pocket of muscle nAChRs (PubMed:35357806).</text>
</comment>
<comment type="subcellular location">
    <subcellularLocation>
        <location evidence="3">Secreted</location>
    </subcellularLocation>
</comment>
<comment type="tissue specificity">
    <text evidence="9">Expressed by the venom duct.</text>
</comment>
<comment type="domain">
    <text evidence="8">The cysteine framework is II (CCC-C-C-C).</text>
</comment>
<comment type="PTM">
    <text evidence="5">The disulfide bond Cys-52-Cys-68 (Cys I-VI), which corresponds to an extra disulfide bond when compared to the cysteine framework I (CC-C-C), does contribute to conotoxin SII stability and imparts a unique binding mode at the nAChR.</text>
</comment>
<comment type="mass spectrometry"/>
<comment type="miscellaneous">
    <text evidence="4 5">Negative results: shows no or weak inhibition on neuronal nAChR alpha-3-beta-2/CHRNA3-CHRNB2, alpha-3-beta-4/CHRNA3-CHRNB4, alpha-4-beta-2/CHRNA4-CHRNB2, alpha-4-beta-4/CHRNA4-CHRNB4, alpha-7/CHRNA7, alpha-9-alpha-10/CHRNA9-CHRNA10 (PubMed:35357806). Has no effect on the release of catecholamines evoked by nicotine (PubMed:15707935).</text>
</comment>
<comment type="similarity">
    <text evidence="8">Belongs to the conotoxin A superfamily.</text>
</comment>
<dbReference type="EMBL" id="AY157497">
    <property type="protein sequence ID" value="AAN77902.1"/>
    <property type="molecule type" value="mRNA"/>
</dbReference>
<dbReference type="PIR" id="A44379">
    <property type="entry name" value="A44379"/>
</dbReference>
<dbReference type="PDB" id="6OTB">
    <property type="method" value="NMR"/>
    <property type="chains" value="A=51-69"/>
</dbReference>
<dbReference type="PDB" id="6OVJ">
    <property type="method" value="NMR"/>
    <property type="chains" value="A=52-64"/>
</dbReference>
<dbReference type="PDBsum" id="6OTB"/>
<dbReference type="PDBsum" id="6OVJ"/>
<dbReference type="SMR" id="P28879"/>
<dbReference type="ConoServer" id="3900">
    <property type="toxin name" value="SII precursor"/>
</dbReference>
<dbReference type="ConoServer" id="9">
    <property type="toxin name" value="SII precursor"/>
</dbReference>
<dbReference type="ConoServer" id="91">
    <property type="toxin name" value="SII precursor"/>
</dbReference>
<dbReference type="GO" id="GO:0005576">
    <property type="term" value="C:extracellular region"/>
    <property type="evidence" value="ECO:0007669"/>
    <property type="project" value="UniProtKB-SubCell"/>
</dbReference>
<dbReference type="GO" id="GO:0035792">
    <property type="term" value="C:host cell postsynaptic membrane"/>
    <property type="evidence" value="ECO:0007669"/>
    <property type="project" value="UniProtKB-KW"/>
</dbReference>
<dbReference type="GO" id="GO:0030550">
    <property type="term" value="F:acetylcholine receptor inhibitor activity"/>
    <property type="evidence" value="ECO:0007669"/>
    <property type="project" value="UniProtKB-KW"/>
</dbReference>
<dbReference type="GO" id="GO:0099106">
    <property type="term" value="F:ion channel regulator activity"/>
    <property type="evidence" value="ECO:0007669"/>
    <property type="project" value="UniProtKB-KW"/>
</dbReference>
<dbReference type="GO" id="GO:0090729">
    <property type="term" value="F:toxin activity"/>
    <property type="evidence" value="ECO:0007669"/>
    <property type="project" value="UniProtKB-KW"/>
</dbReference>
<dbReference type="InterPro" id="IPR009958">
    <property type="entry name" value="Conotoxin_a-typ"/>
</dbReference>
<dbReference type="InterPro" id="IPR018072">
    <property type="entry name" value="Conotoxin_a-typ_CS"/>
</dbReference>
<dbReference type="Pfam" id="PF07365">
    <property type="entry name" value="Toxin_8"/>
    <property type="match status" value="1"/>
</dbReference>
<dbReference type="PROSITE" id="PS60014">
    <property type="entry name" value="ALPHA_CONOTOXIN"/>
    <property type="match status" value="1"/>
</dbReference>